<feature type="chain" id="PRO_1000078240" description="Nicotinate-nucleotide--dimethylbenzimidazole phosphoribosyltransferase">
    <location>
        <begin position="1"/>
        <end position="351"/>
    </location>
</feature>
<feature type="active site" description="Proton acceptor" evidence="1">
    <location>
        <position position="318"/>
    </location>
</feature>
<sequence length="351" mass="36154">MDLVQSTINQIGPLDDRAATAARRRQDMLTKPAGSLGRLEELSIRIAGITGRERPRLTNPAVIVMAADHGVARQGVSAFPAEVTPQMVLNFLRGGAAINVLARHVGARVIVVDIGVATDLPPHPDLVSRKLAYGTADFSQEPAMSHETARQAIAVGIACANQAIDSGVDLLATGEMGIANTTAASAVVAAITRRPASEVTGRGTGIDDSGLARKIAVIEQALHRHQPNPDDGLDVLAKVGGLEIGGLAGVILGAAARRVPVVIDGFIAGAAALIAATLAPAATAYMIAGHRSVERGHAAVFSHLDLQPLLDLNMRLGEGTGAVLAMSICQAACKILDEMATFAEAGVSEKV</sequence>
<gene>
    <name evidence="1" type="primary">cobT</name>
    <name type="ordered locus">Caur_2578</name>
</gene>
<keyword id="KW-0169">Cobalamin biosynthesis</keyword>
<keyword id="KW-0328">Glycosyltransferase</keyword>
<keyword id="KW-1185">Reference proteome</keyword>
<keyword id="KW-0808">Transferase</keyword>
<reference key="1">
    <citation type="journal article" date="2011" name="BMC Genomics">
        <title>Complete genome sequence of the filamentous anoxygenic phototrophic bacterium Chloroflexus aurantiacus.</title>
        <authorList>
            <person name="Tang K.H."/>
            <person name="Barry K."/>
            <person name="Chertkov O."/>
            <person name="Dalin E."/>
            <person name="Han C.S."/>
            <person name="Hauser L.J."/>
            <person name="Honchak B.M."/>
            <person name="Karbach L.E."/>
            <person name="Land M.L."/>
            <person name="Lapidus A."/>
            <person name="Larimer F.W."/>
            <person name="Mikhailova N."/>
            <person name="Pitluck S."/>
            <person name="Pierson B.K."/>
            <person name="Blankenship R.E."/>
        </authorList>
    </citation>
    <scope>NUCLEOTIDE SEQUENCE [LARGE SCALE GENOMIC DNA]</scope>
    <source>
        <strain>ATCC 29366 / DSM 635 / J-10-fl</strain>
    </source>
</reference>
<protein>
    <recommendedName>
        <fullName evidence="1">Nicotinate-nucleotide--dimethylbenzimidazole phosphoribosyltransferase</fullName>
        <shortName evidence="1">NN:DBI PRT</shortName>
        <ecNumber evidence="1">2.4.2.21</ecNumber>
    </recommendedName>
    <alternativeName>
        <fullName evidence="1">N(1)-alpha-phosphoribosyltransferase</fullName>
    </alternativeName>
</protein>
<name>COBT_CHLAA</name>
<accession>A9WIQ7</accession>
<evidence type="ECO:0000255" key="1">
    <source>
        <dbReference type="HAMAP-Rule" id="MF_00230"/>
    </source>
</evidence>
<organism>
    <name type="scientific">Chloroflexus aurantiacus (strain ATCC 29366 / DSM 635 / J-10-fl)</name>
    <dbReference type="NCBI Taxonomy" id="324602"/>
    <lineage>
        <taxon>Bacteria</taxon>
        <taxon>Bacillati</taxon>
        <taxon>Chloroflexota</taxon>
        <taxon>Chloroflexia</taxon>
        <taxon>Chloroflexales</taxon>
        <taxon>Chloroflexineae</taxon>
        <taxon>Chloroflexaceae</taxon>
        <taxon>Chloroflexus</taxon>
    </lineage>
</organism>
<proteinExistence type="inferred from homology"/>
<comment type="function">
    <text evidence="1">Catalyzes the synthesis of alpha-ribazole-5'-phosphate from nicotinate mononucleotide (NAMN) and 5,6-dimethylbenzimidazole (DMB).</text>
</comment>
<comment type="catalytic activity">
    <reaction evidence="1">
        <text>5,6-dimethylbenzimidazole + nicotinate beta-D-ribonucleotide = alpha-ribazole 5'-phosphate + nicotinate + H(+)</text>
        <dbReference type="Rhea" id="RHEA:11196"/>
        <dbReference type="ChEBI" id="CHEBI:15378"/>
        <dbReference type="ChEBI" id="CHEBI:15890"/>
        <dbReference type="ChEBI" id="CHEBI:32544"/>
        <dbReference type="ChEBI" id="CHEBI:57502"/>
        <dbReference type="ChEBI" id="CHEBI:57918"/>
        <dbReference type="EC" id="2.4.2.21"/>
    </reaction>
</comment>
<comment type="pathway">
    <text evidence="1">Nucleoside biosynthesis; alpha-ribazole biosynthesis; alpha-ribazole from 5,6-dimethylbenzimidazole: step 1/2.</text>
</comment>
<comment type="similarity">
    <text evidence="1">Belongs to the CobT family.</text>
</comment>
<dbReference type="EC" id="2.4.2.21" evidence="1"/>
<dbReference type="EMBL" id="CP000909">
    <property type="protein sequence ID" value="ABY35784.1"/>
    <property type="molecule type" value="Genomic_DNA"/>
</dbReference>
<dbReference type="RefSeq" id="WP_012258437.1">
    <property type="nucleotide sequence ID" value="NC_010175.1"/>
</dbReference>
<dbReference type="RefSeq" id="YP_001636173.1">
    <property type="nucleotide sequence ID" value="NC_010175.1"/>
</dbReference>
<dbReference type="SMR" id="A9WIQ7"/>
<dbReference type="STRING" id="324602.Caur_2578"/>
<dbReference type="EnsemblBacteria" id="ABY35784">
    <property type="protein sequence ID" value="ABY35784"/>
    <property type="gene ID" value="Caur_2578"/>
</dbReference>
<dbReference type="KEGG" id="cau:Caur_2578"/>
<dbReference type="PATRIC" id="fig|324602.8.peg.2905"/>
<dbReference type="eggNOG" id="COG2038">
    <property type="taxonomic scope" value="Bacteria"/>
</dbReference>
<dbReference type="HOGENOM" id="CLU_002982_0_0_0"/>
<dbReference type="InParanoid" id="A9WIQ7"/>
<dbReference type="UniPathway" id="UPA00061">
    <property type="reaction ID" value="UER00516"/>
</dbReference>
<dbReference type="Proteomes" id="UP000002008">
    <property type="component" value="Chromosome"/>
</dbReference>
<dbReference type="GO" id="GO:0008939">
    <property type="term" value="F:nicotinate-nucleotide-dimethylbenzimidazole phosphoribosyltransferase activity"/>
    <property type="evidence" value="ECO:0007669"/>
    <property type="project" value="UniProtKB-UniRule"/>
</dbReference>
<dbReference type="GO" id="GO:0009236">
    <property type="term" value="P:cobalamin biosynthetic process"/>
    <property type="evidence" value="ECO:0007669"/>
    <property type="project" value="UniProtKB-KW"/>
</dbReference>
<dbReference type="CDD" id="cd02439">
    <property type="entry name" value="DMB-PRT_CobT"/>
    <property type="match status" value="1"/>
</dbReference>
<dbReference type="FunFam" id="3.40.50.10210:FF:000001">
    <property type="entry name" value="Nicotinate-nucleotide--dimethylbenzimidazole phosphoribosyltransferase"/>
    <property type="match status" value="1"/>
</dbReference>
<dbReference type="Gene3D" id="1.10.1610.10">
    <property type="match status" value="1"/>
</dbReference>
<dbReference type="Gene3D" id="3.40.50.10210">
    <property type="match status" value="1"/>
</dbReference>
<dbReference type="HAMAP" id="MF_00230">
    <property type="entry name" value="CobT"/>
    <property type="match status" value="1"/>
</dbReference>
<dbReference type="InterPro" id="IPR003200">
    <property type="entry name" value="Nict_dMeBzImd_PRibTrfase"/>
</dbReference>
<dbReference type="InterPro" id="IPR017846">
    <property type="entry name" value="Nict_dMeBzImd_PRibTrfase_bact"/>
</dbReference>
<dbReference type="InterPro" id="IPR023195">
    <property type="entry name" value="Nict_dMeBzImd_PRibTrfase_N"/>
</dbReference>
<dbReference type="InterPro" id="IPR036087">
    <property type="entry name" value="Nict_dMeBzImd_PRibTrfase_sf"/>
</dbReference>
<dbReference type="NCBIfam" id="TIGR03160">
    <property type="entry name" value="cobT_DBIPRT"/>
    <property type="match status" value="1"/>
</dbReference>
<dbReference type="NCBIfam" id="NF000996">
    <property type="entry name" value="PRK00105.1"/>
    <property type="match status" value="1"/>
</dbReference>
<dbReference type="PANTHER" id="PTHR43463">
    <property type="entry name" value="NICOTINATE-NUCLEOTIDE--DIMETHYLBENZIMIDAZOLE PHOSPHORIBOSYLTRANSFERASE"/>
    <property type="match status" value="1"/>
</dbReference>
<dbReference type="PANTHER" id="PTHR43463:SF1">
    <property type="entry name" value="NICOTINATE-NUCLEOTIDE--DIMETHYLBENZIMIDAZOLE PHOSPHORIBOSYLTRANSFERASE"/>
    <property type="match status" value="1"/>
</dbReference>
<dbReference type="Pfam" id="PF02277">
    <property type="entry name" value="DBI_PRT"/>
    <property type="match status" value="1"/>
</dbReference>
<dbReference type="SUPFAM" id="SSF52733">
    <property type="entry name" value="Nicotinate mononucleotide:5,6-dimethylbenzimidazole phosphoribosyltransferase (CobT)"/>
    <property type="match status" value="1"/>
</dbReference>